<keyword id="KW-0150">Chloroplast</keyword>
<keyword id="KW-0378">Hydrolase</keyword>
<keyword id="KW-0934">Plastid</keyword>
<keyword id="KW-1185">Reference proteome</keyword>
<keyword id="KW-0809">Transit peptide</keyword>
<evidence type="ECO:0000250" key="1"/>
<evidence type="ECO:0000255" key="2"/>
<evidence type="ECO:0000256" key="3">
    <source>
        <dbReference type="SAM" id="MobiDB-lite"/>
    </source>
</evidence>
<evidence type="ECO:0000305" key="4"/>
<gene>
    <name type="ORF">OsI_30141</name>
</gene>
<name>6PGL3_ORYSI</name>
<protein>
    <recommendedName>
        <fullName>Probable 6-phosphogluconolactonase 3, chloroplastic</fullName>
        <shortName>6PGL 3</shortName>
        <ecNumber>3.1.1.31</ecNumber>
    </recommendedName>
</protein>
<feature type="transit peptide" description="Chloroplast" evidence="2">
    <location>
        <begin position="1"/>
        <end position="71"/>
    </location>
</feature>
<feature type="chain" id="PRO_0000288677" description="Probable 6-phosphogluconolactonase 3, chloroplastic">
    <location>
        <begin position="72"/>
        <end position="327"/>
    </location>
</feature>
<feature type="region of interest" description="Disordered" evidence="3">
    <location>
        <begin position="1"/>
        <end position="66"/>
    </location>
</feature>
<feature type="compositionally biased region" description="Low complexity" evidence="3">
    <location>
        <begin position="1"/>
        <end position="29"/>
    </location>
</feature>
<feature type="compositionally biased region" description="Low complexity" evidence="3">
    <location>
        <begin position="43"/>
        <end position="66"/>
    </location>
</feature>
<organism>
    <name type="scientific">Oryza sativa subsp. indica</name>
    <name type="common">Rice</name>
    <dbReference type="NCBI Taxonomy" id="39946"/>
    <lineage>
        <taxon>Eukaryota</taxon>
        <taxon>Viridiplantae</taxon>
        <taxon>Streptophyta</taxon>
        <taxon>Embryophyta</taxon>
        <taxon>Tracheophyta</taxon>
        <taxon>Spermatophyta</taxon>
        <taxon>Magnoliopsida</taxon>
        <taxon>Liliopsida</taxon>
        <taxon>Poales</taxon>
        <taxon>Poaceae</taxon>
        <taxon>BOP clade</taxon>
        <taxon>Oryzoideae</taxon>
        <taxon>Oryzeae</taxon>
        <taxon>Oryzinae</taxon>
        <taxon>Oryza</taxon>
        <taxon>Oryza sativa</taxon>
    </lineage>
</organism>
<sequence length="327" mass="34587">MSASAAVSSTCAAASSTTSRRSSSSPASRVQATPRRSLPSRLVASRTSPRSPVVPPVYATASPGGAGGTTAAAARKKLLIFDAEEYLAESLAKYTARLSGEAVAERGAFTVALSGGSLIKALRKLTESPYLEAVEWSKWHVFWVDERVVPKDHADSNYKLAMDGLLSKVPIPASQIYAINDTLSAEGAADEYETCLKQLVNDGVVAISEVTGFPKLDLMLLGMGPDGHVASLFPGHPVVNENLKWVSYIKDSPKPPPERITFTFPLVNSSAHIALVVTGAGKAGAVHKAFSDKQSSSDLLPVEMVSQQEGVLTWFTDKPAVSMLSSI</sequence>
<reference key="1">
    <citation type="journal article" date="2005" name="PLoS Biol.">
        <title>The genomes of Oryza sativa: a history of duplications.</title>
        <authorList>
            <person name="Yu J."/>
            <person name="Wang J."/>
            <person name="Lin W."/>
            <person name="Li S."/>
            <person name="Li H."/>
            <person name="Zhou J."/>
            <person name="Ni P."/>
            <person name="Dong W."/>
            <person name="Hu S."/>
            <person name="Zeng C."/>
            <person name="Zhang J."/>
            <person name="Zhang Y."/>
            <person name="Li R."/>
            <person name="Xu Z."/>
            <person name="Li S."/>
            <person name="Li X."/>
            <person name="Zheng H."/>
            <person name="Cong L."/>
            <person name="Lin L."/>
            <person name="Yin J."/>
            <person name="Geng J."/>
            <person name="Li G."/>
            <person name="Shi J."/>
            <person name="Liu J."/>
            <person name="Lv H."/>
            <person name="Li J."/>
            <person name="Wang J."/>
            <person name="Deng Y."/>
            <person name="Ran L."/>
            <person name="Shi X."/>
            <person name="Wang X."/>
            <person name="Wu Q."/>
            <person name="Li C."/>
            <person name="Ren X."/>
            <person name="Wang J."/>
            <person name="Wang X."/>
            <person name="Li D."/>
            <person name="Liu D."/>
            <person name="Zhang X."/>
            <person name="Ji Z."/>
            <person name="Zhao W."/>
            <person name="Sun Y."/>
            <person name="Zhang Z."/>
            <person name="Bao J."/>
            <person name="Han Y."/>
            <person name="Dong L."/>
            <person name="Ji J."/>
            <person name="Chen P."/>
            <person name="Wu S."/>
            <person name="Liu J."/>
            <person name="Xiao Y."/>
            <person name="Bu D."/>
            <person name="Tan J."/>
            <person name="Yang L."/>
            <person name="Ye C."/>
            <person name="Zhang J."/>
            <person name="Xu J."/>
            <person name="Zhou Y."/>
            <person name="Yu Y."/>
            <person name="Zhang B."/>
            <person name="Zhuang S."/>
            <person name="Wei H."/>
            <person name="Liu B."/>
            <person name="Lei M."/>
            <person name="Yu H."/>
            <person name="Li Y."/>
            <person name="Xu H."/>
            <person name="Wei S."/>
            <person name="He X."/>
            <person name="Fang L."/>
            <person name="Zhang Z."/>
            <person name="Zhang Y."/>
            <person name="Huang X."/>
            <person name="Su Z."/>
            <person name="Tong W."/>
            <person name="Li J."/>
            <person name="Tong Z."/>
            <person name="Li S."/>
            <person name="Ye J."/>
            <person name="Wang L."/>
            <person name="Fang L."/>
            <person name="Lei T."/>
            <person name="Chen C.-S."/>
            <person name="Chen H.-C."/>
            <person name="Xu Z."/>
            <person name="Li H."/>
            <person name="Huang H."/>
            <person name="Zhang F."/>
            <person name="Xu H."/>
            <person name="Li N."/>
            <person name="Zhao C."/>
            <person name="Li S."/>
            <person name="Dong L."/>
            <person name="Huang Y."/>
            <person name="Li L."/>
            <person name="Xi Y."/>
            <person name="Qi Q."/>
            <person name="Li W."/>
            <person name="Zhang B."/>
            <person name="Hu W."/>
            <person name="Zhang Y."/>
            <person name="Tian X."/>
            <person name="Jiao Y."/>
            <person name="Liang X."/>
            <person name="Jin J."/>
            <person name="Gao L."/>
            <person name="Zheng W."/>
            <person name="Hao B."/>
            <person name="Liu S.-M."/>
            <person name="Wang W."/>
            <person name="Yuan L."/>
            <person name="Cao M."/>
            <person name="McDermott J."/>
            <person name="Samudrala R."/>
            <person name="Wang J."/>
            <person name="Wong G.K.-S."/>
            <person name="Yang H."/>
        </authorList>
    </citation>
    <scope>NUCLEOTIDE SEQUENCE [LARGE SCALE GENOMIC DNA]</scope>
    <source>
        <strain>cv. 93-11</strain>
    </source>
</reference>
<accession>A2YXS5</accession>
<accession>B8B9D1</accession>
<dbReference type="EC" id="3.1.1.31"/>
<dbReference type="EMBL" id="CM000133">
    <property type="protein sequence ID" value="EEC83988.1"/>
    <property type="molecule type" value="Genomic_DNA"/>
</dbReference>
<dbReference type="SMR" id="A2YXS5"/>
<dbReference type="STRING" id="39946.A2YXS5"/>
<dbReference type="EnsemblPlants" id="BGIOSGA029114-TA">
    <property type="protein sequence ID" value="BGIOSGA029114-PA"/>
    <property type="gene ID" value="BGIOSGA029114"/>
</dbReference>
<dbReference type="Gramene" id="BGIOSGA029114-TA">
    <property type="protein sequence ID" value="BGIOSGA029114-PA"/>
    <property type="gene ID" value="BGIOSGA029114"/>
</dbReference>
<dbReference type="HOGENOM" id="CLU_053947_0_0_1"/>
<dbReference type="OMA" id="KLAWCLP"/>
<dbReference type="UniPathway" id="UPA00115">
    <property type="reaction ID" value="UER00409"/>
</dbReference>
<dbReference type="Proteomes" id="UP000007015">
    <property type="component" value="Chromosome 8"/>
</dbReference>
<dbReference type="GO" id="GO:0009507">
    <property type="term" value="C:chloroplast"/>
    <property type="evidence" value="ECO:0007669"/>
    <property type="project" value="UniProtKB-SubCell"/>
</dbReference>
<dbReference type="GO" id="GO:0017057">
    <property type="term" value="F:6-phosphogluconolactonase activity"/>
    <property type="evidence" value="ECO:0007669"/>
    <property type="project" value="UniProtKB-EC"/>
</dbReference>
<dbReference type="GO" id="GO:0005975">
    <property type="term" value="P:carbohydrate metabolic process"/>
    <property type="evidence" value="ECO:0007669"/>
    <property type="project" value="InterPro"/>
</dbReference>
<dbReference type="GO" id="GO:0006098">
    <property type="term" value="P:pentose-phosphate shunt"/>
    <property type="evidence" value="ECO:0007669"/>
    <property type="project" value="UniProtKB-UniPathway"/>
</dbReference>
<dbReference type="CDD" id="cd01400">
    <property type="entry name" value="6PGL"/>
    <property type="match status" value="1"/>
</dbReference>
<dbReference type="FunFam" id="3.40.50.1360:FF:000009">
    <property type="entry name" value="Probable 6-phosphogluconolactonase"/>
    <property type="match status" value="1"/>
</dbReference>
<dbReference type="Gene3D" id="3.40.50.1360">
    <property type="match status" value="1"/>
</dbReference>
<dbReference type="InterPro" id="IPR005900">
    <property type="entry name" value="6-phosphogluconolactonase_DevB"/>
</dbReference>
<dbReference type="InterPro" id="IPR006148">
    <property type="entry name" value="Glc/Gal-6P_isomerase"/>
</dbReference>
<dbReference type="InterPro" id="IPR037171">
    <property type="entry name" value="NagB/RpiA_transferase-like"/>
</dbReference>
<dbReference type="InterPro" id="IPR039104">
    <property type="entry name" value="PGLS"/>
</dbReference>
<dbReference type="NCBIfam" id="TIGR01198">
    <property type="entry name" value="pgl"/>
    <property type="match status" value="1"/>
</dbReference>
<dbReference type="PANTHER" id="PTHR11054">
    <property type="entry name" value="6-PHOSPHOGLUCONOLACTONASE"/>
    <property type="match status" value="1"/>
</dbReference>
<dbReference type="PANTHER" id="PTHR11054:SF3">
    <property type="entry name" value="6-PHOSPHOGLUCONOLACTONASE 3, CHLOROPLASTIC-RELATED"/>
    <property type="match status" value="1"/>
</dbReference>
<dbReference type="Pfam" id="PF01182">
    <property type="entry name" value="Glucosamine_iso"/>
    <property type="match status" value="1"/>
</dbReference>
<dbReference type="SUPFAM" id="SSF100950">
    <property type="entry name" value="NagB/RpiA/CoA transferase-like"/>
    <property type="match status" value="1"/>
</dbReference>
<proteinExistence type="inferred from homology"/>
<comment type="function">
    <text evidence="1">Hydrolysis of 6-phosphogluconolactone to 6-phosphogluconate.</text>
</comment>
<comment type="catalytic activity">
    <reaction>
        <text>6-phospho-D-glucono-1,5-lactone + H2O = 6-phospho-D-gluconate + H(+)</text>
        <dbReference type="Rhea" id="RHEA:12556"/>
        <dbReference type="ChEBI" id="CHEBI:15377"/>
        <dbReference type="ChEBI" id="CHEBI:15378"/>
        <dbReference type="ChEBI" id="CHEBI:57955"/>
        <dbReference type="ChEBI" id="CHEBI:58759"/>
        <dbReference type="EC" id="3.1.1.31"/>
    </reaction>
</comment>
<comment type="pathway">
    <text>Carbohydrate degradation; pentose phosphate pathway; D-ribulose 5-phosphate from D-glucose 6-phosphate (oxidative stage): step 2/3.</text>
</comment>
<comment type="subcellular location">
    <subcellularLocation>
        <location evidence="4">Plastid</location>
        <location evidence="4">Chloroplast</location>
    </subcellularLocation>
</comment>
<comment type="similarity">
    <text evidence="4">Belongs to the glucosamine/galactosamine-6-phosphate isomerase family. 6-phosphogluconolactonase subfamily.</text>
</comment>